<gene>
    <name type="ORF">v1g226489</name>
</gene>
<name>LTOR5_NEMVE</name>
<reference key="1">
    <citation type="journal article" date="2007" name="Science">
        <title>Sea anemone genome reveals ancestral eumetazoan gene repertoire and genomic organization.</title>
        <authorList>
            <person name="Putnam N.H."/>
            <person name="Srivastava M."/>
            <person name="Hellsten U."/>
            <person name="Dirks B."/>
            <person name="Chapman J."/>
            <person name="Salamov A."/>
            <person name="Terry A."/>
            <person name="Shapiro H."/>
            <person name="Lindquist E."/>
            <person name="Kapitonov V.V."/>
            <person name="Jurka J."/>
            <person name="Genikhovich G."/>
            <person name="Grigoriev I.V."/>
            <person name="Lucas S.M."/>
            <person name="Steele R.E."/>
            <person name="Finnerty J.R."/>
            <person name="Technau U."/>
            <person name="Martindale M.Q."/>
            <person name="Rokhsar D.S."/>
        </authorList>
    </citation>
    <scope>NUCLEOTIDE SEQUENCE [LARGE SCALE GENOMIC DNA]</scope>
    <source>
        <strain>CH2 X CH6</strain>
    </source>
</reference>
<organism>
    <name type="scientific">Nematostella vectensis</name>
    <name type="common">Starlet sea anemone</name>
    <dbReference type="NCBI Taxonomy" id="45351"/>
    <lineage>
        <taxon>Eukaryota</taxon>
        <taxon>Metazoa</taxon>
        <taxon>Cnidaria</taxon>
        <taxon>Anthozoa</taxon>
        <taxon>Hexacorallia</taxon>
        <taxon>Actiniaria</taxon>
        <taxon>Edwardsiidae</taxon>
        <taxon>Nematostella</taxon>
    </lineage>
</organism>
<evidence type="ECO:0000250" key="1"/>
<evidence type="ECO:0000305" key="2"/>
<sequence>MEKDLESHVDDVMSEHGVVGVMCTDDQGLSLIAKGTANPATAGFVQNLAESARKLYPDSEQQPVICLESDACNLLIKSQNKVTIAVHKVPS</sequence>
<protein>
    <recommendedName>
        <fullName>Ragulator complex protein LAMTOR5 homolog</fullName>
    </recommendedName>
    <alternativeName>
        <fullName>Late endosomal/lysosomal adaptor and MAPK and MTOR activator 5</fullName>
    </alternativeName>
</protein>
<comment type="function">
    <text evidence="1">Regulator of the TOR pathway, a signaling cascade that promotes cell growth in response to growth factors, energy levels, and amino acids. As part of the Ragulator complex, may activate the TOR signaling cascade in response to amino acids (By similarity).</text>
</comment>
<comment type="subunit">
    <text evidence="1">Part of the Ragulator complex.</text>
</comment>
<comment type="subcellular location">
    <subcellularLocation>
        <location evidence="1">Cytoplasm</location>
    </subcellularLocation>
    <subcellularLocation>
        <location evidence="1">Lysosome</location>
    </subcellularLocation>
</comment>
<comment type="similarity">
    <text evidence="2">Belongs to the LAMTOR5 family.</text>
</comment>
<dbReference type="EMBL" id="DS469536">
    <property type="protein sequence ID" value="EDO45318.1"/>
    <property type="molecule type" value="Genomic_DNA"/>
</dbReference>
<dbReference type="SMR" id="A7RT29"/>
<dbReference type="STRING" id="45351.A7RT29"/>
<dbReference type="EnsemblMetazoa" id="EDO45318">
    <property type="protein sequence ID" value="EDO45318"/>
    <property type="gene ID" value="NEMVEDRAFT_v1g226489"/>
</dbReference>
<dbReference type="KEGG" id="nve:5517381"/>
<dbReference type="eggNOG" id="ENOG502S5TK">
    <property type="taxonomic scope" value="Eukaryota"/>
</dbReference>
<dbReference type="HOGENOM" id="CLU_164970_0_0_1"/>
<dbReference type="InParanoid" id="A7RT29"/>
<dbReference type="OMA" id="GIIYKQT"/>
<dbReference type="OrthoDB" id="76862at2759"/>
<dbReference type="PhylomeDB" id="A7RT29"/>
<dbReference type="Proteomes" id="UP000001593">
    <property type="component" value="Unassembled WGS sequence"/>
</dbReference>
<dbReference type="GO" id="GO:0005764">
    <property type="term" value="C:lysosome"/>
    <property type="evidence" value="ECO:0000250"/>
    <property type="project" value="UniProtKB"/>
</dbReference>
<dbReference type="GO" id="GO:0071986">
    <property type="term" value="C:Ragulator complex"/>
    <property type="evidence" value="ECO:0000250"/>
    <property type="project" value="UniProtKB"/>
</dbReference>
<dbReference type="GO" id="GO:0071230">
    <property type="term" value="P:cellular response to amino acid stimulus"/>
    <property type="evidence" value="ECO:0000250"/>
    <property type="project" value="UniProtKB"/>
</dbReference>
<dbReference type="GO" id="GO:0043066">
    <property type="term" value="P:negative regulation of apoptotic process"/>
    <property type="evidence" value="ECO:0007669"/>
    <property type="project" value="InterPro"/>
</dbReference>
<dbReference type="GO" id="GO:0032008">
    <property type="term" value="P:positive regulation of TOR signaling"/>
    <property type="evidence" value="ECO:0000250"/>
    <property type="project" value="UniProtKB"/>
</dbReference>
<dbReference type="GO" id="GO:1904263">
    <property type="term" value="P:positive regulation of TORC1 signaling"/>
    <property type="evidence" value="ECO:0000318"/>
    <property type="project" value="GO_Central"/>
</dbReference>
<dbReference type="GO" id="GO:0061462">
    <property type="term" value="P:protein localization to lysosome"/>
    <property type="evidence" value="ECO:0000250"/>
    <property type="project" value="UniProtKB"/>
</dbReference>
<dbReference type="GO" id="GO:0008361">
    <property type="term" value="P:regulation of cell size"/>
    <property type="evidence" value="ECO:0000250"/>
    <property type="project" value="UniProtKB"/>
</dbReference>
<dbReference type="FunFam" id="3.30.450.30:FF:000005">
    <property type="entry name" value="Ragulator complex protein LAMTOR5 homolog"/>
    <property type="match status" value="1"/>
</dbReference>
<dbReference type="Gene3D" id="3.30.450.30">
    <property type="entry name" value="Dynein light chain 2a, cytoplasmic"/>
    <property type="match status" value="1"/>
</dbReference>
<dbReference type="InterPro" id="IPR024135">
    <property type="entry name" value="LAMTOR5"/>
</dbReference>
<dbReference type="PANTHER" id="PTHR13342">
    <property type="entry name" value="RAGULATOR COMPLEX PROTEIN LAMTOR5"/>
    <property type="match status" value="1"/>
</dbReference>
<dbReference type="PANTHER" id="PTHR13342:SF2">
    <property type="entry name" value="RAGULATOR COMPLEX PROTEIN LAMTOR5"/>
    <property type="match status" value="1"/>
</dbReference>
<dbReference type="Pfam" id="PF16672">
    <property type="entry name" value="LAMTOR5"/>
    <property type="match status" value="1"/>
</dbReference>
<dbReference type="PRINTS" id="PR02092">
    <property type="entry name" value="HEPBVIRUSXIP"/>
</dbReference>
<keyword id="KW-0963">Cytoplasm</keyword>
<keyword id="KW-0458">Lysosome</keyword>
<keyword id="KW-1185">Reference proteome</keyword>
<proteinExistence type="inferred from homology"/>
<feature type="chain" id="PRO_0000331599" description="Ragulator complex protein LAMTOR5 homolog">
    <location>
        <begin position="1"/>
        <end position="91"/>
    </location>
</feature>
<accession>A7RT29</accession>